<accession>B8GDM8</accession>
<organism>
    <name type="scientific">Methanosphaerula palustris (strain ATCC BAA-1556 / DSM 19958 / E1-9c)</name>
    <dbReference type="NCBI Taxonomy" id="521011"/>
    <lineage>
        <taxon>Archaea</taxon>
        <taxon>Methanobacteriati</taxon>
        <taxon>Methanobacteriota</taxon>
        <taxon>Stenosarchaea group</taxon>
        <taxon>Methanomicrobia</taxon>
        <taxon>Methanomicrobiales</taxon>
        <taxon>Methanoregulaceae</taxon>
        <taxon>Methanosphaerula</taxon>
    </lineage>
</organism>
<evidence type="ECO:0000255" key="1">
    <source>
        <dbReference type="HAMAP-Rule" id="MF_01467"/>
    </source>
</evidence>
<sequence>MLEKLVTSLETCPMVQRNGYNYFIHPISDGVPIVEPELLREIGCAMVKMLDLDKVDKIVVAEAMGIHIGTVLSLMTGIPMNIVRKREYKLPGEVAVHQTTGYSKGELYLNGLFAGDRVVIIDDVISTGGTARALLSALGQIGVDVVDICVVIQRGNPDIGRDYKSLTKIEVNERVHVIDKHC</sequence>
<keyword id="KW-0963">Cytoplasm</keyword>
<keyword id="KW-0328">Glycosyltransferase</keyword>
<keyword id="KW-0660">Purine salvage</keyword>
<keyword id="KW-1185">Reference proteome</keyword>
<keyword id="KW-0808">Transferase</keyword>
<comment type="function">
    <text evidence="1">Catalyzes a salvage reaction resulting in the formation of IMP that is energically less costly than de novo synthesis.</text>
</comment>
<comment type="catalytic activity">
    <reaction evidence="1">
        <text>IMP + diphosphate = hypoxanthine + 5-phospho-alpha-D-ribose 1-diphosphate</text>
        <dbReference type="Rhea" id="RHEA:17973"/>
        <dbReference type="ChEBI" id="CHEBI:17368"/>
        <dbReference type="ChEBI" id="CHEBI:33019"/>
        <dbReference type="ChEBI" id="CHEBI:58017"/>
        <dbReference type="ChEBI" id="CHEBI:58053"/>
        <dbReference type="EC" id="2.4.2.8"/>
    </reaction>
</comment>
<comment type="catalytic activity">
    <reaction evidence="1">
        <text>GMP + diphosphate = guanine + 5-phospho-alpha-D-ribose 1-diphosphate</text>
        <dbReference type="Rhea" id="RHEA:25424"/>
        <dbReference type="ChEBI" id="CHEBI:16235"/>
        <dbReference type="ChEBI" id="CHEBI:33019"/>
        <dbReference type="ChEBI" id="CHEBI:58017"/>
        <dbReference type="ChEBI" id="CHEBI:58115"/>
        <dbReference type="EC" id="2.4.2.8"/>
    </reaction>
</comment>
<comment type="pathway">
    <text evidence="1">Purine metabolism; IMP biosynthesis via salvage pathway; IMP from hypoxanthine: step 1/1.</text>
</comment>
<comment type="subunit">
    <text evidence="1">Homodimer.</text>
</comment>
<comment type="subcellular location">
    <subcellularLocation>
        <location evidence="1">Cytoplasm</location>
    </subcellularLocation>
</comment>
<comment type="similarity">
    <text evidence="1">Belongs to the purine/pyrimidine phosphoribosyltransferase family. Archaeal HPRT subfamily.</text>
</comment>
<gene>
    <name evidence="1" type="primary">hpt</name>
    <name type="ordered locus">Mpal_2081</name>
</gene>
<feature type="chain" id="PRO_0000415483" description="Hypoxanthine/guanine phosphoribosyltransferase">
    <location>
        <begin position="1"/>
        <end position="182"/>
    </location>
</feature>
<protein>
    <recommendedName>
        <fullName evidence="1">Hypoxanthine/guanine phosphoribosyltransferase</fullName>
        <shortName evidence="1">HGPRTase</shortName>
        <ecNumber evidence="1">2.4.2.8</ecNumber>
    </recommendedName>
</protein>
<reference key="1">
    <citation type="journal article" date="2015" name="Genome Announc.">
        <title>Complete Genome Sequence of Methanosphaerula palustris E1-9CT, a Hydrogenotrophic Methanogen Isolated from a Minerotrophic Fen Peatland.</title>
        <authorList>
            <person name="Cadillo-Quiroz H."/>
            <person name="Browne P."/>
            <person name="Kyrpides N."/>
            <person name="Woyke T."/>
            <person name="Goodwin L."/>
            <person name="Detter C."/>
            <person name="Yavitt J.B."/>
            <person name="Zinder S.H."/>
        </authorList>
    </citation>
    <scope>NUCLEOTIDE SEQUENCE [LARGE SCALE GENOMIC DNA]</scope>
    <source>
        <strain>ATCC BAA-1556 / DSM 19958 / E1-9c</strain>
    </source>
</reference>
<proteinExistence type="inferred from homology"/>
<dbReference type="EC" id="2.4.2.8" evidence="1"/>
<dbReference type="EMBL" id="CP001338">
    <property type="protein sequence ID" value="ACL17379.1"/>
    <property type="molecule type" value="Genomic_DNA"/>
</dbReference>
<dbReference type="RefSeq" id="WP_012618698.1">
    <property type="nucleotide sequence ID" value="NC_011832.1"/>
</dbReference>
<dbReference type="SMR" id="B8GDM8"/>
<dbReference type="STRING" id="521011.Mpal_2081"/>
<dbReference type="GeneID" id="7271558"/>
<dbReference type="KEGG" id="mpl:Mpal_2081"/>
<dbReference type="eggNOG" id="arCOG00030">
    <property type="taxonomic scope" value="Archaea"/>
</dbReference>
<dbReference type="HOGENOM" id="CLU_126376_0_0_2"/>
<dbReference type="OrthoDB" id="8323at2157"/>
<dbReference type="UniPathway" id="UPA00591">
    <property type="reaction ID" value="UER00648"/>
</dbReference>
<dbReference type="Proteomes" id="UP000002457">
    <property type="component" value="Chromosome"/>
</dbReference>
<dbReference type="GO" id="GO:0005737">
    <property type="term" value="C:cytoplasm"/>
    <property type="evidence" value="ECO:0007669"/>
    <property type="project" value="UniProtKB-SubCell"/>
</dbReference>
<dbReference type="GO" id="GO:0052657">
    <property type="term" value="F:guanine phosphoribosyltransferase activity"/>
    <property type="evidence" value="ECO:0007669"/>
    <property type="project" value="RHEA"/>
</dbReference>
<dbReference type="GO" id="GO:0004422">
    <property type="term" value="F:hypoxanthine phosphoribosyltransferase activity"/>
    <property type="evidence" value="ECO:0007669"/>
    <property type="project" value="UniProtKB-UniRule"/>
</dbReference>
<dbReference type="GO" id="GO:0032264">
    <property type="term" value="P:IMP salvage"/>
    <property type="evidence" value="ECO:0007669"/>
    <property type="project" value="UniProtKB-UniRule"/>
</dbReference>
<dbReference type="GO" id="GO:0006166">
    <property type="term" value="P:purine ribonucleoside salvage"/>
    <property type="evidence" value="ECO:0007669"/>
    <property type="project" value="UniProtKB-KW"/>
</dbReference>
<dbReference type="CDD" id="cd06223">
    <property type="entry name" value="PRTases_typeI"/>
    <property type="match status" value="1"/>
</dbReference>
<dbReference type="Gene3D" id="3.40.50.2020">
    <property type="match status" value="1"/>
</dbReference>
<dbReference type="HAMAP" id="MF_01467">
    <property type="entry name" value="Hypx_phosphoribosyltr"/>
    <property type="match status" value="1"/>
</dbReference>
<dbReference type="InterPro" id="IPR026597">
    <property type="entry name" value="HGPRTase-like"/>
</dbReference>
<dbReference type="InterPro" id="IPR000836">
    <property type="entry name" value="PRibTrfase_dom"/>
</dbReference>
<dbReference type="InterPro" id="IPR029057">
    <property type="entry name" value="PRTase-like"/>
</dbReference>
<dbReference type="InterPro" id="IPR050118">
    <property type="entry name" value="Pur/Pyrimidine_PRTase"/>
</dbReference>
<dbReference type="NCBIfam" id="NF040646">
    <property type="entry name" value="HPT_Archaea"/>
    <property type="match status" value="1"/>
</dbReference>
<dbReference type="NCBIfam" id="NF002635">
    <property type="entry name" value="PRK02304.1-4"/>
    <property type="match status" value="1"/>
</dbReference>
<dbReference type="PANTHER" id="PTHR43864">
    <property type="entry name" value="HYPOXANTHINE/GUANINE PHOSPHORIBOSYLTRANSFERASE"/>
    <property type="match status" value="1"/>
</dbReference>
<dbReference type="PANTHER" id="PTHR43864:SF1">
    <property type="entry name" value="XANTHINE PHOSPHORIBOSYLTRANSFERASE"/>
    <property type="match status" value="1"/>
</dbReference>
<dbReference type="Pfam" id="PF00156">
    <property type="entry name" value="Pribosyltran"/>
    <property type="match status" value="1"/>
</dbReference>
<dbReference type="SUPFAM" id="SSF53271">
    <property type="entry name" value="PRTase-like"/>
    <property type="match status" value="1"/>
</dbReference>
<dbReference type="PROSITE" id="PS00103">
    <property type="entry name" value="PUR_PYR_PR_TRANSFER"/>
    <property type="match status" value="1"/>
</dbReference>
<name>HPRT_METPE</name>